<protein>
    <recommendedName>
        <fullName evidence="1">tRNA-specific 2-thiouridylase MnmA</fullName>
        <ecNumber evidence="1">2.8.1.13</ecNumber>
    </recommendedName>
</protein>
<dbReference type="EC" id="2.8.1.13" evidence="1"/>
<dbReference type="EMBL" id="AE016822">
    <property type="protein sequence ID" value="AAT89252.1"/>
    <property type="molecule type" value="Genomic_DNA"/>
</dbReference>
<dbReference type="RefSeq" id="WP_011186244.1">
    <property type="nucleotide sequence ID" value="NC_006087.1"/>
</dbReference>
<dbReference type="SMR" id="Q6AEE4"/>
<dbReference type="STRING" id="281090.Lxx14390"/>
<dbReference type="KEGG" id="lxx:Lxx14390"/>
<dbReference type="eggNOG" id="COG0482">
    <property type="taxonomic scope" value="Bacteria"/>
</dbReference>
<dbReference type="HOGENOM" id="CLU_035188_0_2_11"/>
<dbReference type="Proteomes" id="UP000001306">
    <property type="component" value="Chromosome"/>
</dbReference>
<dbReference type="GO" id="GO:0005737">
    <property type="term" value="C:cytoplasm"/>
    <property type="evidence" value="ECO:0007669"/>
    <property type="project" value="UniProtKB-SubCell"/>
</dbReference>
<dbReference type="GO" id="GO:0005524">
    <property type="term" value="F:ATP binding"/>
    <property type="evidence" value="ECO:0007669"/>
    <property type="project" value="UniProtKB-KW"/>
</dbReference>
<dbReference type="GO" id="GO:0000049">
    <property type="term" value="F:tRNA binding"/>
    <property type="evidence" value="ECO:0007669"/>
    <property type="project" value="UniProtKB-KW"/>
</dbReference>
<dbReference type="GO" id="GO:0103016">
    <property type="term" value="F:tRNA-uridine 2-sulfurtransferase activity"/>
    <property type="evidence" value="ECO:0007669"/>
    <property type="project" value="UniProtKB-EC"/>
</dbReference>
<dbReference type="GO" id="GO:0002143">
    <property type="term" value="P:tRNA wobble position uridine thiolation"/>
    <property type="evidence" value="ECO:0007669"/>
    <property type="project" value="TreeGrafter"/>
</dbReference>
<dbReference type="CDD" id="cd01998">
    <property type="entry name" value="MnmA_TRMU-like"/>
    <property type="match status" value="1"/>
</dbReference>
<dbReference type="FunFam" id="2.30.30.280:FF:000001">
    <property type="entry name" value="tRNA-specific 2-thiouridylase MnmA"/>
    <property type="match status" value="1"/>
</dbReference>
<dbReference type="FunFam" id="3.40.50.620:FF:000057">
    <property type="entry name" value="tRNA-specific 2-thiouridylase MnmA"/>
    <property type="match status" value="1"/>
</dbReference>
<dbReference type="Gene3D" id="2.30.30.280">
    <property type="entry name" value="Adenine nucleotide alpha hydrolases-like domains"/>
    <property type="match status" value="1"/>
</dbReference>
<dbReference type="Gene3D" id="3.40.50.620">
    <property type="entry name" value="HUPs"/>
    <property type="match status" value="1"/>
</dbReference>
<dbReference type="Gene3D" id="2.40.30.10">
    <property type="entry name" value="Translation factors"/>
    <property type="match status" value="1"/>
</dbReference>
<dbReference type="HAMAP" id="MF_00144">
    <property type="entry name" value="tRNA_thiouridyl_MnmA"/>
    <property type="match status" value="1"/>
</dbReference>
<dbReference type="InterPro" id="IPR004506">
    <property type="entry name" value="MnmA-like"/>
</dbReference>
<dbReference type="InterPro" id="IPR046885">
    <property type="entry name" value="MnmA-like_C"/>
</dbReference>
<dbReference type="InterPro" id="IPR046884">
    <property type="entry name" value="MnmA-like_central"/>
</dbReference>
<dbReference type="InterPro" id="IPR023382">
    <property type="entry name" value="MnmA-like_central_sf"/>
</dbReference>
<dbReference type="InterPro" id="IPR014729">
    <property type="entry name" value="Rossmann-like_a/b/a_fold"/>
</dbReference>
<dbReference type="NCBIfam" id="NF001138">
    <property type="entry name" value="PRK00143.1"/>
    <property type="match status" value="1"/>
</dbReference>
<dbReference type="NCBIfam" id="TIGR00420">
    <property type="entry name" value="trmU"/>
    <property type="match status" value="1"/>
</dbReference>
<dbReference type="PANTHER" id="PTHR11933:SF5">
    <property type="entry name" value="MITOCHONDRIAL TRNA-SPECIFIC 2-THIOURIDYLASE 1"/>
    <property type="match status" value="1"/>
</dbReference>
<dbReference type="PANTHER" id="PTHR11933">
    <property type="entry name" value="TRNA 5-METHYLAMINOMETHYL-2-THIOURIDYLATE -METHYLTRANSFERASE"/>
    <property type="match status" value="1"/>
</dbReference>
<dbReference type="Pfam" id="PF03054">
    <property type="entry name" value="tRNA_Me_trans"/>
    <property type="match status" value="1"/>
</dbReference>
<dbReference type="Pfam" id="PF20258">
    <property type="entry name" value="tRNA_Me_trans_C"/>
    <property type="match status" value="1"/>
</dbReference>
<dbReference type="Pfam" id="PF20259">
    <property type="entry name" value="tRNA_Me_trans_M"/>
    <property type="match status" value="1"/>
</dbReference>
<dbReference type="SUPFAM" id="SSF52402">
    <property type="entry name" value="Adenine nucleotide alpha hydrolases-like"/>
    <property type="match status" value="1"/>
</dbReference>
<keyword id="KW-0067">ATP-binding</keyword>
<keyword id="KW-0963">Cytoplasm</keyword>
<keyword id="KW-1015">Disulfide bond</keyword>
<keyword id="KW-0547">Nucleotide-binding</keyword>
<keyword id="KW-1185">Reference proteome</keyword>
<keyword id="KW-0694">RNA-binding</keyword>
<keyword id="KW-0808">Transferase</keyword>
<keyword id="KW-0819">tRNA processing</keyword>
<keyword id="KW-0820">tRNA-binding</keyword>
<gene>
    <name evidence="1" type="primary">mnmA</name>
    <name type="synonym">trmU</name>
    <name type="ordered locus">Lxx14390</name>
</gene>
<comment type="function">
    <text evidence="1">Catalyzes the 2-thiolation of uridine at the wobble position (U34) of tRNA, leading to the formation of s(2)U34.</text>
</comment>
<comment type="catalytic activity">
    <reaction evidence="1">
        <text>S-sulfanyl-L-cysteinyl-[protein] + uridine(34) in tRNA + AH2 + ATP = 2-thiouridine(34) in tRNA + L-cysteinyl-[protein] + A + AMP + diphosphate + H(+)</text>
        <dbReference type="Rhea" id="RHEA:47032"/>
        <dbReference type="Rhea" id="RHEA-COMP:10131"/>
        <dbReference type="Rhea" id="RHEA-COMP:11726"/>
        <dbReference type="Rhea" id="RHEA-COMP:11727"/>
        <dbReference type="Rhea" id="RHEA-COMP:11728"/>
        <dbReference type="ChEBI" id="CHEBI:13193"/>
        <dbReference type="ChEBI" id="CHEBI:15378"/>
        <dbReference type="ChEBI" id="CHEBI:17499"/>
        <dbReference type="ChEBI" id="CHEBI:29950"/>
        <dbReference type="ChEBI" id="CHEBI:30616"/>
        <dbReference type="ChEBI" id="CHEBI:33019"/>
        <dbReference type="ChEBI" id="CHEBI:61963"/>
        <dbReference type="ChEBI" id="CHEBI:65315"/>
        <dbReference type="ChEBI" id="CHEBI:87170"/>
        <dbReference type="ChEBI" id="CHEBI:456215"/>
        <dbReference type="EC" id="2.8.1.13"/>
    </reaction>
</comment>
<comment type="subcellular location">
    <subcellularLocation>
        <location evidence="1">Cytoplasm</location>
    </subcellularLocation>
</comment>
<comment type="similarity">
    <text evidence="1">Belongs to the MnmA/TRMU family.</text>
</comment>
<proteinExistence type="inferred from homology"/>
<sequence>MRVLAAMSGGVDSAVAAARAVEAGHEVVGVHLALSRLPGTLHTGSRGCCTIEDSMDAQRAANVIGIPYYVWDFSERFALDVVDDFIAEYSAGRTPNPCMRCNEKIKFAALLEKALDLGFDAVCTGHYASIVTDADGNRELHRASAWAKDQSYVLGVLTADQLAHSMFPLGVTPSKAEVRAEAAARGLTVAAKPDSHDICFIPDGDTRGWLAERVGAETGDILDRSGARIGTHEGAHAYTVGQRKGLNIGFPSPDGRPRFVLEVRPKDNTVVVGPKEALDIAEIAGARYTWAGTPPASPDTPFACEVQIRAHADPVPAVARVAGGELVIRPDAPLNGVAPGQTAVVYAGTRVLGQTTIDRAVSAVPV</sequence>
<evidence type="ECO:0000255" key="1">
    <source>
        <dbReference type="HAMAP-Rule" id="MF_00144"/>
    </source>
</evidence>
<organism>
    <name type="scientific">Leifsonia xyli subsp. xyli (strain CTCB07)</name>
    <dbReference type="NCBI Taxonomy" id="281090"/>
    <lineage>
        <taxon>Bacteria</taxon>
        <taxon>Bacillati</taxon>
        <taxon>Actinomycetota</taxon>
        <taxon>Actinomycetes</taxon>
        <taxon>Micrococcales</taxon>
        <taxon>Microbacteriaceae</taxon>
        <taxon>Leifsonia</taxon>
    </lineage>
</organism>
<reference key="1">
    <citation type="journal article" date="2004" name="Mol. Plant Microbe Interact.">
        <title>The genome sequence of the Gram-positive sugarcane pathogen Leifsonia xyli subsp. xyli.</title>
        <authorList>
            <person name="Monteiro-Vitorello C.B."/>
            <person name="Camargo L.E.A."/>
            <person name="Van Sluys M.A."/>
            <person name="Kitajima J.P."/>
            <person name="Truffi D."/>
            <person name="do Amaral A.M."/>
            <person name="Harakava R."/>
            <person name="de Oliveira J.C.F."/>
            <person name="Wood D."/>
            <person name="de Oliveira M.C."/>
            <person name="Miyaki C.Y."/>
            <person name="Takita M.A."/>
            <person name="da Silva A.C.R."/>
            <person name="Furlan L.R."/>
            <person name="Carraro D.M."/>
            <person name="Camarotte G."/>
            <person name="Almeida N.F. Jr."/>
            <person name="Carrer H."/>
            <person name="Coutinho L.L."/>
            <person name="El-Dorry H.A."/>
            <person name="Ferro M.I.T."/>
            <person name="Gagliardi P.R."/>
            <person name="Giglioti E."/>
            <person name="Goldman M.H.S."/>
            <person name="Goldman G.H."/>
            <person name="Kimura E.T."/>
            <person name="Ferro E.S."/>
            <person name="Kuramae E.E."/>
            <person name="Lemos E.G.M."/>
            <person name="Lemos M.V.F."/>
            <person name="Mauro S.M.Z."/>
            <person name="Machado M.A."/>
            <person name="Marino C.L."/>
            <person name="Menck C.F."/>
            <person name="Nunes L.R."/>
            <person name="Oliveira R.C."/>
            <person name="Pereira G.G."/>
            <person name="Siqueira W."/>
            <person name="de Souza A.A."/>
            <person name="Tsai S.M."/>
            <person name="Zanca A.S."/>
            <person name="Simpson A.J.G."/>
            <person name="Brumbley S.M."/>
            <person name="Setubal J.C."/>
        </authorList>
    </citation>
    <scope>NUCLEOTIDE SEQUENCE [LARGE SCALE GENOMIC DNA]</scope>
    <source>
        <strain>CTCB07</strain>
    </source>
</reference>
<accession>Q6AEE4</accession>
<name>MNMA_LEIXX</name>
<feature type="chain" id="PRO_0000121644" description="tRNA-specific 2-thiouridylase MnmA">
    <location>
        <begin position="1"/>
        <end position="366"/>
    </location>
</feature>
<feature type="region of interest" description="Interaction with tRNA" evidence="1">
    <location>
        <begin position="148"/>
        <end position="150"/>
    </location>
</feature>
<feature type="active site" description="Nucleophile" evidence="1">
    <location>
        <position position="101"/>
    </location>
</feature>
<feature type="active site" description="Cysteine persulfide intermediate" evidence="1">
    <location>
        <position position="199"/>
    </location>
</feature>
<feature type="binding site" evidence="1">
    <location>
        <begin position="6"/>
        <end position="13"/>
    </location>
    <ligand>
        <name>ATP</name>
        <dbReference type="ChEBI" id="CHEBI:30616"/>
    </ligand>
</feature>
<feature type="binding site" evidence="1">
    <location>
        <position position="32"/>
    </location>
    <ligand>
        <name>ATP</name>
        <dbReference type="ChEBI" id="CHEBI:30616"/>
    </ligand>
</feature>
<feature type="binding site" evidence="1">
    <location>
        <position position="125"/>
    </location>
    <ligand>
        <name>ATP</name>
        <dbReference type="ChEBI" id="CHEBI:30616"/>
    </ligand>
</feature>
<feature type="site" description="Interaction with tRNA" evidence="1">
    <location>
        <position position="126"/>
    </location>
</feature>
<feature type="site" description="Interaction with tRNA" evidence="1">
    <location>
        <position position="341"/>
    </location>
</feature>
<feature type="disulfide bond" description="Alternate" evidence="1">
    <location>
        <begin position="101"/>
        <end position="199"/>
    </location>
</feature>